<gene>
    <name evidence="1" type="primary">speA</name>
    <name type="ordered locus">Sbal_1768</name>
</gene>
<sequence>MNDWSIDDARAGYNVTHWSQGFYGISDHGEVTVSPDPKNPDYKIGLNELAKDMVKAGVALPVLVRFPQILHHRVNSLCQAFDQAIQKYEYQADYLLVYPIKVNQQQTVVEEILASQASKEVPQLGLEAGSKPELMAVLAMAQKASSVIVCNGYKDNEYIRLALIGEKLGHKVYIVLEKLSELKMVLAESKRLGVTPRLGLRARLAFQGKGKWQASGGEKSKFGLSAAQILLVVEQLKQNDMLDSLQLLHFHLGSQIANIRDIRQGVSEAGRFYCELRALGASVNCFDVGGGLAVDYDGTRSQSNNSMNYGLTEYANNIVNVLTDICNEYEQPMPRIISESGRYLTAHHAVLITDVIGTEAYQPEDIQPPAEESPQLLHNMWHSWSELSGRADQRALIEIYHDSQSDLQEAHSLFALGQLSLAERAWAEQANLRVCHEVQGLLSAKNRYHRPIIDELNEKLADKFFVNFSLFQSLPDAWGIDQVFPVLPLSGLDKAPERRAVMLDITCDSDGIVDQYVDGQGIETTLPVPAWSADSPYLIGFFLVGAYQEILGDMHNLFGDTNSAVVRIEDNGVTNIESVLAGDTVADVLRYVNLDAVAFMRTYEELVNLHIAEDERAQILEELQVGLKGYTYLEDFS</sequence>
<protein>
    <recommendedName>
        <fullName evidence="1">Biosynthetic arginine decarboxylase</fullName>
        <shortName evidence="1">ADC</shortName>
        <ecNumber evidence="1">4.1.1.19</ecNumber>
    </recommendedName>
</protein>
<evidence type="ECO:0000255" key="1">
    <source>
        <dbReference type="HAMAP-Rule" id="MF_01417"/>
    </source>
</evidence>
<dbReference type="EC" id="4.1.1.19" evidence="1"/>
<dbReference type="EMBL" id="CP000563">
    <property type="protein sequence ID" value="ABN61275.1"/>
    <property type="molecule type" value="Genomic_DNA"/>
</dbReference>
<dbReference type="RefSeq" id="WP_006081274.1">
    <property type="nucleotide sequence ID" value="NC_009052.1"/>
</dbReference>
<dbReference type="SMR" id="A3D3G2"/>
<dbReference type="STRING" id="325240.Sbal_1768"/>
<dbReference type="KEGG" id="sbl:Sbal_1768"/>
<dbReference type="HOGENOM" id="CLU_027243_1_0_6"/>
<dbReference type="OrthoDB" id="9802658at2"/>
<dbReference type="UniPathway" id="UPA00186">
    <property type="reaction ID" value="UER00284"/>
</dbReference>
<dbReference type="Proteomes" id="UP000001557">
    <property type="component" value="Chromosome"/>
</dbReference>
<dbReference type="GO" id="GO:0008792">
    <property type="term" value="F:arginine decarboxylase activity"/>
    <property type="evidence" value="ECO:0007669"/>
    <property type="project" value="UniProtKB-UniRule"/>
</dbReference>
<dbReference type="GO" id="GO:0046872">
    <property type="term" value="F:metal ion binding"/>
    <property type="evidence" value="ECO:0007669"/>
    <property type="project" value="UniProtKB-KW"/>
</dbReference>
<dbReference type="GO" id="GO:0006527">
    <property type="term" value="P:arginine catabolic process"/>
    <property type="evidence" value="ECO:0007669"/>
    <property type="project" value="InterPro"/>
</dbReference>
<dbReference type="GO" id="GO:0033388">
    <property type="term" value="P:putrescine biosynthetic process from arginine"/>
    <property type="evidence" value="ECO:0007669"/>
    <property type="project" value="TreeGrafter"/>
</dbReference>
<dbReference type="GO" id="GO:0008295">
    <property type="term" value="P:spermidine biosynthetic process"/>
    <property type="evidence" value="ECO:0007669"/>
    <property type="project" value="UniProtKB-UniRule"/>
</dbReference>
<dbReference type="CDD" id="cd06830">
    <property type="entry name" value="PLPDE_III_ADC"/>
    <property type="match status" value="1"/>
</dbReference>
<dbReference type="FunFam" id="1.10.287.3440:FF:000001">
    <property type="entry name" value="Biosynthetic arginine decarboxylase"/>
    <property type="match status" value="1"/>
</dbReference>
<dbReference type="FunFam" id="1.20.58.930:FF:000001">
    <property type="entry name" value="Biosynthetic arginine decarboxylase"/>
    <property type="match status" value="1"/>
</dbReference>
<dbReference type="FunFam" id="2.40.37.10:FF:000001">
    <property type="entry name" value="Biosynthetic arginine decarboxylase"/>
    <property type="match status" value="1"/>
</dbReference>
<dbReference type="FunFam" id="3.20.20.10:FF:000001">
    <property type="entry name" value="Biosynthetic arginine decarboxylase"/>
    <property type="match status" value="1"/>
</dbReference>
<dbReference type="Gene3D" id="1.10.287.3440">
    <property type="match status" value="1"/>
</dbReference>
<dbReference type="Gene3D" id="1.20.58.930">
    <property type="match status" value="1"/>
</dbReference>
<dbReference type="Gene3D" id="3.20.20.10">
    <property type="entry name" value="Alanine racemase"/>
    <property type="match status" value="1"/>
</dbReference>
<dbReference type="Gene3D" id="2.40.37.10">
    <property type="entry name" value="Lyase, Ornithine Decarboxylase, Chain A, domain 1"/>
    <property type="match status" value="1"/>
</dbReference>
<dbReference type="HAMAP" id="MF_01417">
    <property type="entry name" value="SpeA"/>
    <property type="match status" value="1"/>
</dbReference>
<dbReference type="InterPro" id="IPR009006">
    <property type="entry name" value="Ala_racemase/Decarboxylase_C"/>
</dbReference>
<dbReference type="InterPro" id="IPR040634">
    <property type="entry name" value="Arg_decarb_HB"/>
</dbReference>
<dbReference type="InterPro" id="IPR041128">
    <property type="entry name" value="Arg_decarbox_C"/>
</dbReference>
<dbReference type="InterPro" id="IPR002985">
    <property type="entry name" value="Arg_decrbxlase"/>
</dbReference>
<dbReference type="InterPro" id="IPR022644">
    <property type="entry name" value="De-COase2_N"/>
</dbReference>
<dbReference type="InterPro" id="IPR000183">
    <property type="entry name" value="Orn/DAP/Arg_de-COase"/>
</dbReference>
<dbReference type="InterPro" id="IPR029066">
    <property type="entry name" value="PLP-binding_barrel"/>
</dbReference>
<dbReference type="NCBIfam" id="NF003763">
    <property type="entry name" value="PRK05354.1"/>
    <property type="match status" value="1"/>
</dbReference>
<dbReference type="NCBIfam" id="TIGR01273">
    <property type="entry name" value="speA"/>
    <property type="match status" value="1"/>
</dbReference>
<dbReference type="PANTHER" id="PTHR43295">
    <property type="entry name" value="ARGININE DECARBOXYLASE"/>
    <property type="match status" value="1"/>
</dbReference>
<dbReference type="PANTHER" id="PTHR43295:SF9">
    <property type="entry name" value="BIOSYNTHETIC ARGININE DECARBOXYLASE"/>
    <property type="match status" value="1"/>
</dbReference>
<dbReference type="Pfam" id="PF17810">
    <property type="entry name" value="Arg_decarb_HB"/>
    <property type="match status" value="1"/>
</dbReference>
<dbReference type="Pfam" id="PF17944">
    <property type="entry name" value="Arg_decarbox_C"/>
    <property type="match status" value="1"/>
</dbReference>
<dbReference type="Pfam" id="PF02784">
    <property type="entry name" value="Orn_Arg_deC_N"/>
    <property type="match status" value="1"/>
</dbReference>
<dbReference type="PIRSF" id="PIRSF001336">
    <property type="entry name" value="Arg_decrbxlase"/>
    <property type="match status" value="1"/>
</dbReference>
<dbReference type="PRINTS" id="PR01180">
    <property type="entry name" value="ARGDCRBXLASE"/>
</dbReference>
<dbReference type="PRINTS" id="PR01179">
    <property type="entry name" value="ODADCRBXLASE"/>
</dbReference>
<dbReference type="SUPFAM" id="SSF51419">
    <property type="entry name" value="PLP-binding barrel"/>
    <property type="match status" value="1"/>
</dbReference>
<comment type="function">
    <text evidence="1">Catalyzes the biosynthesis of agmatine from arginine.</text>
</comment>
<comment type="catalytic activity">
    <reaction evidence="1">
        <text>L-arginine + H(+) = agmatine + CO2</text>
        <dbReference type="Rhea" id="RHEA:17641"/>
        <dbReference type="ChEBI" id="CHEBI:15378"/>
        <dbReference type="ChEBI" id="CHEBI:16526"/>
        <dbReference type="ChEBI" id="CHEBI:32682"/>
        <dbReference type="ChEBI" id="CHEBI:58145"/>
        <dbReference type="EC" id="4.1.1.19"/>
    </reaction>
</comment>
<comment type="cofactor">
    <cofactor evidence="1">
        <name>Mg(2+)</name>
        <dbReference type="ChEBI" id="CHEBI:18420"/>
    </cofactor>
</comment>
<comment type="cofactor">
    <cofactor evidence="1">
        <name>pyridoxal 5'-phosphate</name>
        <dbReference type="ChEBI" id="CHEBI:597326"/>
    </cofactor>
</comment>
<comment type="pathway">
    <text evidence="1">Amine and polyamine biosynthesis; agmatine biosynthesis; agmatine from L-arginine: step 1/1.</text>
</comment>
<comment type="similarity">
    <text evidence="1">Belongs to the Orn/Lys/Arg decarboxylase class-II family. SpeA subfamily.</text>
</comment>
<feature type="chain" id="PRO_1000024265" description="Biosynthetic arginine decarboxylase">
    <location>
        <begin position="1"/>
        <end position="637"/>
    </location>
</feature>
<feature type="binding site" evidence="1">
    <location>
        <begin position="286"/>
        <end position="296"/>
    </location>
    <ligand>
        <name>substrate</name>
    </ligand>
</feature>
<feature type="modified residue" description="N6-(pyridoxal phosphate)lysine" evidence="1">
    <location>
        <position position="101"/>
    </location>
</feature>
<keyword id="KW-0210">Decarboxylase</keyword>
<keyword id="KW-0456">Lyase</keyword>
<keyword id="KW-0460">Magnesium</keyword>
<keyword id="KW-0479">Metal-binding</keyword>
<keyword id="KW-0620">Polyamine biosynthesis</keyword>
<keyword id="KW-0663">Pyridoxal phosphate</keyword>
<keyword id="KW-1185">Reference proteome</keyword>
<keyword id="KW-0745">Spermidine biosynthesis</keyword>
<organism>
    <name type="scientific">Shewanella baltica (strain OS155 / ATCC BAA-1091)</name>
    <dbReference type="NCBI Taxonomy" id="325240"/>
    <lineage>
        <taxon>Bacteria</taxon>
        <taxon>Pseudomonadati</taxon>
        <taxon>Pseudomonadota</taxon>
        <taxon>Gammaproteobacteria</taxon>
        <taxon>Alteromonadales</taxon>
        <taxon>Shewanellaceae</taxon>
        <taxon>Shewanella</taxon>
    </lineage>
</organism>
<accession>A3D3G2</accession>
<proteinExistence type="inferred from homology"/>
<reference key="1">
    <citation type="submission" date="2007-02" db="EMBL/GenBank/DDBJ databases">
        <title>Complete sequence of chromosome of Shewanella baltica OS155.</title>
        <authorList>
            <consortium name="US DOE Joint Genome Institute"/>
            <person name="Copeland A."/>
            <person name="Lucas S."/>
            <person name="Lapidus A."/>
            <person name="Barry K."/>
            <person name="Detter J.C."/>
            <person name="Glavina del Rio T."/>
            <person name="Hammon N."/>
            <person name="Israni S."/>
            <person name="Dalin E."/>
            <person name="Tice H."/>
            <person name="Pitluck S."/>
            <person name="Sims D.R."/>
            <person name="Brettin T."/>
            <person name="Bruce D."/>
            <person name="Han C."/>
            <person name="Tapia R."/>
            <person name="Brainard J."/>
            <person name="Schmutz J."/>
            <person name="Larimer F."/>
            <person name="Land M."/>
            <person name="Hauser L."/>
            <person name="Kyrpides N."/>
            <person name="Mikhailova N."/>
            <person name="Brettar I."/>
            <person name="Klappenbach J."/>
            <person name="Konstantinidis K."/>
            <person name="Rodrigues J."/>
            <person name="Tiedje J."/>
            <person name="Richardson P."/>
        </authorList>
    </citation>
    <scope>NUCLEOTIDE SEQUENCE [LARGE SCALE GENOMIC DNA]</scope>
    <source>
        <strain>OS155 / ATCC BAA-1091</strain>
    </source>
</reference>
<name>SPEA_SHEB5</name>